<keyword id="KW-0002">3D-structure</keyword>
<keyword id="KW-0175">Coiled coil</keyword>
<keyword id="KW-0255">Endonuclease</keyword>
<keyword id="KW-0378">Hydrolase</keyword>
<keyword id="KW-0540">Nuclease</keyword>
<keyword id="KW-0614">Plasmid</keyword>
<keyword id="KW-0694">RNA-binding</keyword>
<keyword id="KW-1277">Toxin-antitoxin system</keyword>
<feature type="chain" id="PRO_0000432893" description="Endoribonuclease ToxN">
    <location>
        <begin position="1"/>
        <end position="194"/>
    </location>
</feature>
<feature type="region of interest" description="Disordered" evidence="2">
    <location>
        <begin position="171"/>
        <end position="194"/>
    </location>
</feature>
<feature type="coiled-coil region" evidence="1">
    <location>
        <begin position="114"/>
        <end position="182"/>
    </location>
</feature>
<feature type="compositionally biased region" description="Basic and acidic residues" evidence="2">
    <location>
        <begin position="171"/>
        <end position="182"/>
    </location>
</feature>
<feature type="mutagenesis site" description="Overexpression no longer inhibits growth in E.coli." evidence="4">
    <original>F</original>
    <variation>A</variation>
    <location>
        <position position="29"/>
    </location>
</feature>
<feature type="mutagenesis site" description="Overexpression no longer inhibits growth in E.coli." evidence="4">
    <original>K</original>
    <variation>A</variation>
    <location>
        <position position="31"/>
    </location>
</feature>
<feature type="mutagenesis site" description="Overexpression no longer inhibits growth in E.coli." evidence="4">
    <original>S</original>
    <variation>A</variation>
    <location>
        <position position="57"/>
    </location>
</feature>
<feature type="mutagenesis site" description="Overexpression no longer inhibits growth in E.coli." evidence="4">
    <original>R</original>
    <variation>A</variation>
    <location>
        <position position="58"/>
    </location>
</feature>
<feature type="mutagenesis site" description="Overexpression no longer inhibits growth in E.coli." evidence="4">
    <original>Y</original>
    <variation>A</variation>
    <location>
        <position position="110"/>
    </location>
</feature>
<feature type="mutagenesis site" description="Overexpression no longer inhibits growth in E.coli." evidence="4">
    <original>K</original>
    <variation>A</variation>
    <location>
        <position position="148"/>
    </location>
</feature>
<feature type="strand" evidence="9">
    <location>
        <begin position="9"/>
        <end position="12"/>
    </location>
</feature>
<feature type="helix" evidence="9">
    <location>
        <begin position="14"/>
        <end position="23"/>
    </location>
</feature>
<feature type="strand" evidence="9">
    <location>
        <begin position="38"/>
        <end position="41"/>
    </location>
</feature>
<feature type="strand" evidence="9">
    <location>
        <begin position="51"/>
        <end position="56"/>
    </location>
</feature>
<feature type="helix" evidence="9">
    <location>
        <begin position="65"/>
        <end position="67"/>
    </location>
</feature>
<feature type="strand" evidence="9">
    <location>
        <begin position="68"/>
        <end position="72"/>
    </location>
</feature>
<feature type="strand" evidence="9">
    <location>
        <begin position="78"/>
        <end position="83"/>
    </location>
</feature>
<feature type="helix" evidence="9">
    <location>
        <begin position="84"/>
        <end position="86"/>
    </location>
</feature>
<feature type="strand" evidence="9">
    <location>
        <begin position="94"/>
        <end position="97"/>
    </location>
</feature>
<feature type="helix" evidence="9">
    <location>
        <begin position="100"/>
        <end position="106"/>
    </location>
</feature>
<feature type="helix" evidence="9">
    <location>
        <begin position="108"/>
        <end position="139"/>
    </location>
</feature>
<feature type="helix" evidence="9">
    <location>
        <begin position="147"/>
        <end position="155"/>
    </location>
</feature>
<feature type="helix" evidence="9">
    <location>
        <begin position="159"/>
        <end position="169"/>
    </location>
</feature>
<evidence type="ECO:0000255" key="1"/>
<evidence type="ECO:0000256" key="2">
    <source>
        <dbReference type="SAM" id="MobiDB-lite"/>
    </source>
</evidence>
<evidence type="ECO:0000269" key="3">
    <source>
    </source>
</evidence>
<evidence type="ECO:0000269" key="4">
    <source>
    </source>
</evidence>
<evidence type="ECO:0000303" key="5">
    <source>
    </source>
</evidence>
<evidence type="ECO:0000303" key="6">
    <source>
    </source>
</evidence>
<evidence type="ECO:0000303" key="7">
    <source>
    </source>
</evidence>
<evidence type="ECO:0000305" key="8"/>
<evidence type="ECO:0007829" key="9">
    <source>
        <dbReference type="PDB" id="4ATO"/>
    </source>
</evidence>
<geneLocation type="plasmid">
    <name>pAW63</name>
</geneLocation>
<sequence length="194" mass="22887">MTNKDNPKFHTISTEYIDYLREADSKVPFNKDEQHSRPYVGVLEKINGHDYFVPLTSRNDKNFNSQVSVKLFDNDEKRIGVLLVNNMIPVPEKECKEIDIAEKTAADPQYGNLMLKQYLFLKENMDRVTNKVEKVYKDVTVQGKPSHKQKFLKGVCCDFPKLEEKCQEYKERDQAKERDKARRIAYMRQMGRER</sequence>
<reference key="1">
    <citation type="journal article" date="2005" name="BMC Genomics">
        <title>Conjugative plasmid pAW63 brings new insights into the genesis of the Bacillus anthracis virulence plasmid pXO2 and of the Bacillus thuringiensis plasmid pBT9727.</title>
        <authorList>
            <person name="Van der Auwera G.A."/>
            <person name="Andrup L."/>
            <person name="Mahillon J."/>
        </authorList>
    </citation>
    <scope>NUCLEOTIDE SEQUENCE [GENOMIC DNA]</scope>
    <source>
        <strain>ATCC 35866 / NRRL B-4488 / HD-73</strain>
        <plasmid>pAW63</plasmid>
    </source>
</reference>
<reference key="2">
    <citation type="journal article" date="2009" name="Proc. Natl. Acad. Sci. U.S.A.">
        <title>The phage abortive infection system, ToxIN, functions as a protein-RNA toxin-antitoxin pair.</title>
        <authorList>
            <person name="Fineran P.C."/>
            <person name="Blower T.R."/>
            <person name="Foulds I.J."/>
            <person name="Humphreys D.P."/>
            <person name="Lilley K.S."/>
            <person name="Salmond G.P."/>
        </authorList>
    </citation>
    <scope>FUNCTION</scope>
    <scope>EXPRESSION IN E.COLI</scope>
    <source>
        <strain>ATCC 35866 / NRRL B-4488 / HD-73</strain>
        <plasmid>pAW63</plasmid>
    </source>
</reference>
<reference key="3">
    <citation type="journal article" date="2013" name="Proc. Natl. Acad. Sci. U.S.A.">
        <title>Selectivity and self-assembly in the control of a bacterial toxin by an antitoxic noncoding RNA pseudoknot.</title>
        <authorList>
            <person name="Short F.L."/>
            <person name="Pei X.Y."/>
            <person name="Blower T.R."/>
            <person name="Ong S.L."/>
            <person name="Fineran P.C."/>
            <person name="Luisi B.F."/>
            <person name="Salmond G.P."/>
        </authorList>
    </citation>
    <scope>X-RAY CRYSTALLOGRAPHY (2.20 ANGSTROMS) IN COMPLEX WITH ANTITOXIN TOXI</scope>
    <scope>FUNCTION</scope>
    <scope>SUBUNIT</scope>
    <scope>MUTAGENESIS OF PHE-29; LYS-31; SER-57; ARG-58; TYR-110 AND LYS-148</scope>
    <scope>RNA-BINDING</scope>
    <source>
        <strain>ATCC 35866 / NRRL B-4488 / HD-73</strain>
        <plasmid>pAW63</plasmid>
    </source>
</reference>
<dbReference type="EC" id="3.1.-.-"/>
<dbReference type="EMBL" id="DQ025752">
    <property type="protein sequence ID" value="AAZ06636.1"/>
    <property type="molecule type" value="Genomic_DNA"/>
</dbReference>
<dbReference type="RefSeq" id="WP_000182254.1">
    <property type="nucleotide sequence ID" value="NZ_PHSM01000020.1"/>
</dbReference>
<dbReference type="PDB" id="4ATO">
    <property type="method" value="X-ray"/>
    <property type="resolution" value="2.20 A"/>
    <property type="chains" value="A=1-194"/>
</dbReference>
<dbReference type="PDBsum" id="4ATO"/>
<dbReference type="SMR" id="Q3YN09"/>
<dbReference type="EvolutionaryTrace" id="Q3YN09"/>
<dbReference type="GO" id="GO:0003723">
    <property type="term" value="F:RNA binding"/>
    <property type="evidence" value="ECO:0000314"/>
    <property type="project" value="UniProtKB"/>
</dbReference>
<dbReference type="GO" id="GO:0004521">
    <property type="term" value="F:RNA endonuclease activity"/>
    <property type="evidence" value="ECO:0000314"/>
    <property type="project" value="UniProtKB"/>
</dbReference>
<dbReference type="GO" id="GO:0006276">
    <property type="term" value="P:plasmid maintenance"/>
    <property type="evidence" value="ECO:0000315"/>
    <property type="project" value="UniProtKB"/>
</dbReference>
<dbReference type="FunFam" id="3.10.129.130:FF:000001">
    <property type="entry name" value="Endoribonuclease ToxN"/>
    <property type="match status" value="1"/>
</dbReference>
<dbReference type="Gene3D" id="3.10.129.130">
    <property type="match status" value="1"/>
</dbReference>
<dbReference type="InterPro" id="IPR025911">
    <property type="entry name" value="ToxN/AbiQ_toxin"/>
</dbReference>
<dbReference type="InterPro" id="IPR053735">
    <property type="entry name" value="Type_III_TA_endoRNase"/>
</dbReference>
<dbReference type="Pfam" id="PF13958">
    <property type="entry name" value="ToxN_toxin"/>
    <property type="match status" value="1"/>
</dbReference>
<comment type="function">
    <text evidence="3 4">Toxic component of a type III toxin-antitoxin (TA) system (PubMed:19124776). An endoribonuclease which cleaves between the first and second A of AAAAA sequences; it tolerates other nucleotides in positions +2 and +4 of the consensus. Digests cognate antitoxin RNA ToxI as shown by the 2'-3'-cyclic phosphate at the 3' end of the 34-nt repeats and probably other RNAs (PubMed:23267117). Inhibits growth when expressed in E.coli without causing cell lysis; this bacteriostatic effect is neutralized by cognate RNA antitoxin ToxI, which has 2.9 nearly identical 34 nucleotide-long repeats (PubMed:19124776). Non-cognate antitoxin RNA from P.atrosepticum does not inhibit this toxin (PubMed:23267117). The toxin-antitoxin pair function in plasmid maintenance (a plasmid addiction system), but unlike its P.atrosepticum homolog it is not seen to confer resistance to bacteriophages (PubMed:23267117).</text>
</comment>
<comment type="subunit">
    <text evidence="4">One ToxN monomer binds to a 34-nt-long single repeat of the ToxI RNA; this complex forms a triangular heterohexameric complex with ToxN connected by the ToxI RNA to another toxin molecule. The ToxI repeats are cleavage products of their precursor. The ToxI repeat forms a pseudoknot which occludes the toxin active site.</text>
</comment>
<comment type="miscellaneous">
    <text evidence="5">Encoded on a conjugative plasmid that includes genes for a type IV secretion system.</text>
</comment>
<comment type="similarity">
    <text evidence="8">Belongs to the ToxN/AbiQ toxin family.</text>
</comment>
<accession>Q3YN09</accession>
<proteinExistence type="evidence at protein level"/>
<protein>
    <recommendedName>
        <fullName evidence="7">Endoribonuclease ToxN</fullName>
        <ecNumber>3.1.-.-</ecNumber>
    </recommendedName>
    <alternativeName>
        <fullName evidence="6">Toxin ToxN</fullName>
    </alternativeName>
</protein>
<gene>
    <name evidence="6" type="primary">toxN</name>
    <name type="ORF">pAW63_066</name>
</gene>
<name>TOXN_BACTK</name>
<organism>
    <name type="scientific">Bacillus thuringiensis subsp. kurstaki</name>
    <dbReference type="NCBI Taxonomy" id="29339"/>
    <lineage>
        <taxon>Bacteria</taxon>
        <taxon>Bacillati</taxon>
        <taxon>Bacillota</taxon>
        <taxon>Bacilli</taxon>
        <taxon>Bacillales</taxon>
        <taxon>Bacillaceae</taxon>
        <taxon>Bacillus</taxon>
        <taxon>Bacillus cereus group</taxon>
    </lineage>
</organism>